<keyword id="KW-0025">Alternative splicing</keyword>
<keyword id="KW-0106">Calcium</keyword>
<keyword id="KW-0107">Calcium channel</keyword>
<keyword id="KW-0109">Calcium transport</keyword>
<keyword id="KW-0225">Disease variant</keyword>
<keyword id="KW-1015">Disulfide bond</keyword>
<keyword id="KW-0887">Epilepsy</keyword>
<keyword id="KW-0325">Glycoprotein</keyword>
<keyword id="KW-0407">Ion channel</keyword>
<keyword id="KW-0406">Ion transport</keyword>
<keyword id="KW-0472">Membrane</keyword>
<keyword id="KW-0479">Metal-binding</keyword>
<keyword id="KW-1267">Proteomics identification</keyword>
<keyword id="KW-1185">Reference proteome</keyword>
<keyword id="KW-0732">Signal</keyword>
<keyword id="KW-0812">Transmembrane</keyword>
<keyword id="KW-1133">Transmembrane helix</keyword>
<keyword id="KW-0813">Transport</keyword>
<keyword id="KW-0851">Voltage-gated channel</keyword>
<comment type="function">
    <text evidence="7 8 10">The alpha-2/delta subunit of voltage-dependent calcium channels regulates calcium current density and activation/inactivation kinetics of the calcium channel. Acts as a regulatory subunit for P/Q-type calcium channel (CACNA1A), N-type (CACNA1B), L-type (CACNA1C OR CACNA1D) and possibly T-type (CACNA1G) (PubMed:15111129, PubMed:23339110). Overexpression induces apoptosis.</text>
</comment>
<comment type="subunit">
    <text evidence="1">Dimer formed of alpha-2-2 and delta-2 chains; disulfide-linked. Voltage-dependent calcium channels are multisubunit complexes, consisting of alpha-1 (CACNA1), alpha-2 (CACNA2D), beta (CACNB) and delta (CACNA2D) subunits in a 1:1:1:1 ratio (By similarity).</text>
</comment>
<comment type="subcellular location">
    <subcellularLocation>
        <location evidence="21">Membrane</location>
        <topology evidence="21">Single-pass type I membrane protein</topology>
    </subcellularLocation>
    <text evidence="1">Colocalizes with CACNA1A in lipid raft fractions.</text>
</comment>
<comment type="alternative products">
    <event type="alternative splicing"/>
    <isoform>
        <id>Q9NY47-1</id>
        <name>1</name>
        <name>Alpha2delta-2a</name>
        <sequence type="displayed"/>
    </isoform>
    <isoform>
        <id>Q9NY47-2</id>
        <name>2</name>
        <name>Alpha2delta-2b</name>
        <sequence type="described" ref="VSP_028059"/>
    </isoform>
    <isoform>
        <id>Q9NY47-3</id>
        <name>3</name>
        <sequence type="described" ref="VSP_028059 VSP_028060"/>
    </isoform>
    <isoform>
        <id>Q9NY47-4</id>
        <name>4</name>
        <sequence type="described" ref="VSP_028058 VSP_028059 VSP_028060"/>
    </isoform>
    <isoform>
        <id>Q9NY47-5</id>
        <name>5</name>
        <name>Alpha2delta-2c</name>
        <sequence type="described" ref="VSP_028060"/>
    </isoform>
</comment>
<comment type="tissue specificity">
    <text evidence="5 6 15">Predominantly present in cerebellar cortex. Present in various lung tumor cell lines, while it is absent in normal lung (at protein level). Highly expressed in heart, lung, testis, pancreas and skeletal muscle. Also expressed in kidney, liver, placenta and brain.</text>
</comment>
<comment type="domain">
    <text evidence="1">The MIDAS-like motif in the VWFA domain binds divalent metal cations and is required to promote trafficking of the alpha-1 (CACNA1) subunit to the plasma membrane by an integrin-like switch.</text>
</comment>
<comment type="PTM">
    <text evidence="1">May be proteolytically processed into subunits alpha-2-2 and delta-2 that are disulfide-linked. It is however unclear whether such cleavage really takes place in vivo and has a functional role (By similarity).</text>
</comment>
<comment type="disease" evidence="10 11 12 13">
    <disease id="DI-05616">
        <name>Cerebellar atrophy with seizures and variable developmental delay</name>
        <acronym>CASVDD</acronym>
        <description>An autosomal recessive neurologic disorder characterized by cerebellar ataxia, atrophy of the cerebellar vermis, severe refractory seizures with early onset, and global developmental delay compatible with epileptic encephalopathy in most patients. Disease severity is variable and normal cognitive development has also been reported.</description>
        <dbReference type="MIM" id="618501"/>
    </disease>
    <text>The disease is caused by variants affecting the gene represented in this entry.</text>
</comment>
<comment type="miscellaneous">
    <text>Binds gabapentin, an antiepileptic drug.</text>
</comment>
<comment type="similarity">
    <text evidence="21">Belongs to the calcium channel subunit alpha-2/delta family.</text>
</comment>
<sequence length="1150" mass="129817">MAVPARTCGASRPGPARTARPWPGCGPHPGPGTRRPTSGPPRPLWLLLPLLPLLAAPGASAYSFPQQHTMQHWARRLEQEVDGVMRIFGGVQQLREIYKDNRNLFEVQENEPQKLVEKVAGDIESLLDRKVQALKRLADAAENFQKAHRWQDNIKEEDIVYYDAKADAELDDPESEDVERGSKASTLRLDFIEDPNFKNKVNYSYAAVQIPTDIYKGSTVILNELNWTEALENVFMENRRQDPTLLWQVFGSATGVTRYYPATPWRAPKKIDLYDVRRRPWYIQGASSPKDMVIIVDVSGSVSGLTLKLMKTSVCEMLDTLSDDDYVNVASFNEKAQPVSCFTHLVQANVRNKKVFKEAVQGMVAKGTTGYKAGFEYAFDQLQNSNITRANCNKMIMMFTDGGEDRVQDVFEKYNWPNRTVRVFTFSVGQHNYDVTPLQWMACANKGYYFEIPSIGAIRINTQEYLDVLGRPMVLAGKEAKQVQWTNVYEDALGLGLVVTGTLPVFNLTQDGPGEKKNQLILGVMGIDVALNDIKRLTPNYTLGANGYVFAIDLNGYVLLHPNLKPQTTNFREPVTLDFLDAELEDENKEEIRRSMIDGNKGHKQIRTLVKSLDERYIDEVTRNYTWVPIRSTNYSLGLVLPPYSTFYLQANLSDQILQVKLPISKLKDFEFLLPSSFESEGHVFIAPREYCKDLNASDNNTEFLKNFIELMEKVTPDSKQCNNFLLHNLILDTGITQQLVERVWRDQDLNTYSLLAVFAATDGGITRVFPNKAAEDWTENPEPFNASFYRRSLDNHGYVFKPPHQDALLRPLELENDTVGILVSTAVELSLGRRTLRPAVVGVKLDLEAWAEKFKVLASNRTHQDQPQKCGPNSHCEMDCEVNNEDLLCVLIDDGGFLVLSNQNHQWDQVGRFFSEVDANLMLALYNNSFYTRKESYDYQAACAPQPPGNLGAAPRGVFVPTVADFLNLAWWTSAAAWSLFQQLLYGLIYHSWFQADPAEAEGSPETRESSCVMKQTQYYFGSVNASYNAIIDCGNCSRLFHAQRLTNTNLLFVVAEKPLCSQCEAGRLLQKETHSDGPEQCELVQRPRYRRGPHICFDYNATEDTSDCGRGASFPPSLGVLVSLQLLLLLGLPPRPQPQVLVHASRRL</sequence>
<name>CA2D2_HUMAN</name>
<gene>
    <name type="primary">CACNA2D2</name>
    <name type="synonym">KIAA0558</name>
</gene>
<evidence type="ECO:0000250" key="1"/>
<evidence type="ECO:0000255" key="2"/>
<evidence type="ECO:0000255" key="3">
    <source>
        <dbReference type="PROSITE-ProRule" id="PRU00219"/>
    </source>
</evidence>
<evidence type="ECO:0000256" key="4">
    <source>
        <dbReference type="SAM" id="MobiDB-lite"/>
    </source>
</evidence>
<evidence type="ECO:0000269" key="5">
    <source>
    </source>
</evidence>
<evidence type="ECO:0000269" key="6">
    <source>
    </source>
</evidence>
<evidence type="ECO:0000269" key="7">
    <source>
    </source>
</evidence>
<evidence type="ECO:0000269" key="8">
    <source>
    </source>
</evidence>
<evidence type="ECO:0000269" key="9">
    <source>
    </source>
</evidence>
<evidence type="ECO:0000269" key="10">
    <source>
    </source>
</evidence>
<evidence type="ECO:0000269" key="11">
    <source>
    </source>
</evidence>
<evidence type="ECO:0000269" key="12">
    <source>
    </source>
</evidence>
<evidence type="ECO:0000269" key="13">
    <source>
    </source>
</evidence>
<evidence type="ECO:0000269" key="14">
    <source>
    </source>
</evidence>
<evidence type="ECO:0000269" key="15">
    <source>
    </source>
</evidence>
<evidence type="ECO:0000303" key="16">
    <source>
    </source>
</evidence>
<evidence type="ECO:0000303" key="17">
    <source>
    </source>
</evidence>
<evidence type="ECO:0000303" key="18">
    <source>
    </source>
</evidence>
<evidence type="ECO:0000303" key="19">
    <source>
    </source>
</evidence>
<evidence type="ECO:0000303" key="20">
    <source>
    </source>
</evidence>
<evidence type="ECO:0000305" key="21"/>
<proteinExistence type="evidence at protein level"/>
<feature type="signal peptide" evidence="2">
    <location>
        <begin position="1"/>
        <end position="18"/>
    </location>
</feature>
<feature type="chain" id="PRO_0000304637" description="Voltage-dependent calcium channel subunit alpha-2/delta-2">
    <location>
        <begin position="19"/>
        <end position="1150"/>
    </location>
</feature>
<feature type="chain" id="PRO_0000304638" description="Voltage-dependent calcium channel subunit alpha-2-2" evidence="2">
    <location>
        <begin position="19"/>
        <end position="1001"/>
    </location>
</feature>
<feature type="chain" id="PRO_0000304639" description="Voltage-dependent calcium channel subunit delta-2" evidence="2">
    <location>
        <begin position="1002"/>
        <end position="1150"/>
    </location>
</feature>
<feature type="topological domain" description="Extracellular" evidence="2">
    <location>
        <begin position="19"/>
        <end position="1113"/>
    </location>
</feature>
<feature type="transmembrane region" description="Helical" evidence="2">
    <location>
        <begin position="1114"/>
        <end position="1134"/>
    </location>
</feature>
<feature type="topological domain" description="Cytoplasmic" evidence="2">
    <location>
        <begin position="1135"/>
        <end position="1150"/>
    </location>
</feature>
<feature type="domain" description="VWFA" evidence="3">
    <location>
        <begin position="291"/>
        <end position="469"/>
    </location>
</feature>
<feature type="domain" description="Cache">
    <location>
        <begin position="485"/>
        <end position="574"/>
    </location>
</feature>
<feature type="region of interest" description="Disordered" evidence="4">
    <location>
        <begin position="1"/>
        <end position="41"/>
    </location>
</feature>
<feature type="short sequence motif" description="MIDAS-like motif">
    <location>
        <begin position="297"/>
        <end position="301"/>
    </location>
</feature>
<feature type="binding site" evidence="1">
    <location>
        <position position="297"/>
    </location>
    <ligand>
        <name>a divalent metal cation</name>
        <dbReference type="ChEBI" id="CHEBI:60240"/>
    </ligand>
</feature>
<feature type="binding site" evidence="1">
    <location>
        <position position="299"/>
    </location>
    <ligand>
        <name>a divalent metal cation</name>
        <dbReference type="ChEBI" id="CHEBI:60240"/>
    </ligand>
</feature>
<feature type="binding site" evidence="1">
    <location>
        <position position="301"/>
    </location>
    <ligand>
        <name>a divalent metal cation</name>
        <dbReference type="ChEBI" id="CHEBI:60240"/>
    </ligand>
</feature>
<feature type="glycosylation site" description="N-linked (GlcNAc...) asparagine" evidence="9">
    <location>
        <position position="386"/>
    </location>
</feature>
<feature type="glycosylation site" description="N-linked (GlcNAc...) asparagine" evidence="2">
    <location>
        <position position="418"/>
    </location>
</feature>
<feature type="glycosylation site" description="N-linked (GlcNAc...) asparagine" evidence="2">
    <location>
        <position position="507"/>
    </location>
</feature>
<feature type="glycosylation site" description="N-linked (GlcNAc...) asparagine" evidence="2">
    <location>
        <position position="540"/>
    </location>
</feature>
<feature type="glycosylation site" description="N-linked (GlcNAc...) asparagine" evidence="2">
    <location>
        <position position="624"/>
    </location>
</feature>
<feature type="glycosylation site" description="N-linked (GlcNAc...) asparagine" evidence="2">
    <location>
        <position position="861"/>
    </location>
</feature>
<feature type="disulfide bond" description="Interchain (between alpha-2-2 and delta-2 chains)" evidence="1">
    <location>
        <begin position="443"/>
        <end position="1098"/>
    </location>
</feature>
<feature type="splice variant" id="VSP_028058" description="In isoform 4." evidence="20">
    <location>
        <begin position="1"/>
        <end position="69"/>
    </location>
</feature>
<feature type="splice variant" id="VSP_028059" description="In isoform 2, isoform 3 and isoform 4." evidence="16 17 18 19 20">
    <original>LPISKLKD</original>
    <variation>Y</variation>
    <location>
        <begin position="662"/>
        <end position="669"/>
    </location>
</feature>
<feature type="splice variant" id="VSP_028060" description="In isoform 3, isoform 4 and isoform 5." evidence="17 18 19 20">
    <original>HS</original>
    <variation>HCPA</variation>
    <location>
        <begin position="1076"/>
        <end position="1077"/>
    </location>
</feature>
<feature type="sequence variant" id="VAR_035048" description="In dbSNP:rs35497591.">
    <original>A</original>
    <variation>V</variation>
    <location>
        <position position="138"/>
    </location>
</feature>
<feature type="sequence variant" id="VAR_083105" description="In CASVDD; uncertain significance; dbSNP:rs1211603072." evidence="13">
    <original>P</original>
    <variation>L</variation>
    <location>
        <position position="261"/>
    </location>
</feature>
<feature type="sequence variant" id="VAR_057782" description="In dbSNP:rs743855.">
    <original>E</original>
    <variation>K</variation>
    <location>
        <position position="334"/>
    </location>
</feature>
<feature type="sequence variant" id="VAR_085040" description="Found in a patient with progressive myoclonus epilepsy and developmental delay; uncertain significance; dbSNP:rs1705182962." evidence="14">
    <original>Y</original>
    <variation>C</variation>
    <location>
        <position position="371"/>
    </location>
</feature>
<feature type="sequence variant" id="VAR_083106" description="In CASVDD; impaired regulation of current density and inactivation kinetics of N- and L-type calcium channels; dbSNP:rs587776948." evidence="10">
    <original>L</original>
    <variation>P</variation>
    <location>
        <position position="1047"/>
    </location>
</feature>
<feature type="sequence variant" id="VAR_083107" description="In CASVDD; uncertain significance; dbSNP:rs1575578837." evidence="13">
    <original>L</original>
    <variation>P</variation>
    <location>
        <position position="1053"/>
    </location>
</feature>
<feature type="sequence conflict" description="In Ref. 3; CAB86193." evidence="21" ref="3">
    <original>P</original>
    <variation>R</variation>
    <location>
        <position position="663"/>
    </location>
</feature>
<protein>
    <recommendedName>
        <fullName>Voltage-dependent calcium channel subunit alpha-2/delta-2</fullName>
    </recommendedName>
    <alternativeName>
        <fullName>Voltage-gated calcium channel subunit alpha-2/delta-2</fullName>
    </alternativeName>
    <component>
        <recommendedName>
            <fullName>Voltage-dependent calcium channel subunit alpha-2-2</fullName>
        </recommendedName>
    </component>
    <component>
        <recommendedName>
            <fullName>Voltage-dependent calcium channel subunit delta-2</fullName>
        </recommendedName>
    </component>
</protein>
<reference key="1">
    <citation type="journal article" date="1999" name="J. Neurosci.">
        <title>Molecular diversity of the calcium channel alpha2delta subunit.</title>
        <authorList>
            <person name="Klugbauer N."/>
            <person name="Lacinova L."/>
            <person name="Marais E."/>
            <person name="Hobom M."/>
            <person name="Hofmann F."/>
        </authorList>
    </citation>
    <scope>NUCLEOTIDE SEQUENCE [MRNA] (ISOFORMS 3 AND 4)</scope>
    <scope>TISSUE SPECIFICITY</scope>
</reference>
<reference key="2">
    <citation type="journal article" date="2000" name="J. Biol. Chem.">
        <title>Functional properties of a new voltage-dependent calcium channel alpha(2)delta auxiliary subunit gene (CACNA2D2).</title>
        <authorList>
            <person name="Gao B."/>
            <person name="Sekido Y."/>
            <person name="Maximov A."/>
            <person name="Saad M."/>
            <person name="Forgacs E."/>
            <person name="Latif F."/>
            <person name="Wei M.-H."/>
            <person name="Lerman M."/>
            <person name="Lee J.-H."/>
            <person name="Perez-Reyes E."/>
            <person name="Bezprozvanny I."/>
            <person name="Minna J.D."/>
        </authorList>
    </citation>
    <scope>NUCLEOTIDE SEQUENCE [MRNA] (ISOFORM 3)</scope>
    <scope>TISSUE SPECIFICITY</scope>
</reference>
<reference key="3">
    <citation type="journal article" date="2000" name="Eur. J. Neurosci.">
        <title>Neuronal distribution and functional characterization of the calcium channel alpha2delta-2 subunit.</title>
        <authorList>
            <person name="Hobom M."/>
            <person name="Dai S."/>
            <person name="Marais E."/>
            <person name="Lacinova L."/>
            <person name="Hofmann F."/>
            <person name="Klugbauer N."/>
        </authorList>
    </citation>
    <scope>NUCLEOTIDE SEQUENCE [MRNA] (ISOFORMS 1 AND 2)</scope>
    <source>
        <tissue>Thyroid</tissue>
    </source>
</reference>
<reference key="4">
    <citation type="journal article" date="1998" name="DNA Res.">
        <title>Prediction of the coding sequences of unidentified human genes. IX. The complete sequences of 100 new cDNA clones from brain which can code for large proteins in vitro.</title>
        <authorList>
            <person name="Nagase T."/>
            <person name="Ishikawa K."/>
            <person name="Miyajima N."/>
            <person name="Tanaka A."/>
            <person name="Kotani H."/>
            <person name="Nomura N."/>
            <person name="Ohara O."/>
        </authorList>
    </citation>
    <scope>NUCLEOTIDE SEQUENCE [LARGE SCALE MRNA] (ISOFORM 3)</scope>
    <source>
        <tissue>Brain</tissue>
    </source>
</reference>
<reference key="5">
    <citation type="journal article" date="2006" name="Nature">
        <title>The DNA sequence, annotation and analysis of human chromosome 3.</title>
        <authorList>
            <person name="Muzny D.M."/>
            <person name="Scherer S.E."/>
            <person name="Kaul R."/>
            <person name="Wang J."/>
            <person name="Yu J."/>
            <person name="Sudbrak R."/>
            <person name="Buhay C.J."/>
            <person name="Chen R."/>
            <person name="Cree A."/>
            <person name="Ding Y."/>
            <person name="Dugan-Rocha S."/>
            <person name="Gill R."/>
            <person name="Gunaratne P."/>
            <person name="Harris R.A."/>
            <person name="Hawes A.C."/>
            <person name="Hernandez J."/>
            <person name="Hodgson A.V."/>
            <person name="Hume J."/>
            <person name="Jackson A."/>
            <person name="Khan Z.M."/>
            <person name="Kovar-Smith C."/>
            <person name="Lewis L.R."/>
            <person name="Lozado R.J."/>
            <person name="Metzker M.L."/>
            <person name="Milosavljevic A."/>
            <person name="Miner G.R."/>
            <person name="Morgan M.B."/>
            <person name="Nazareth L.V."/>
            <person name="Scott G."/>
            <person name="Sodergren E."/>
            <person name="Song X.-Z."/>
            <person name="Steffen D."/>
            <person name="Wei S."/>
            <person name="Wheeler D.A."/>
            <person name="Wright M.W."/>
            <person name="Worley K.C."/>
            <person name="Yuan Y."/>
            <person name="Zhang Z."/>
            <person name="Adams C.Q."/>
            <person name="Ansari-Lari M.A."/>
            <person name="Ayele M."/>
            <person name="Brown M.J."/>
            <person name="Chen G."/>
            <person name="Chen Z."/>
            <person name="Clendenning J."/>
            <person name="Clerc-Blankenburg K.P."/>
            <person name="Chen R."/>
            <person name="Chen Z."/>
            <person name="Davis C."/>
            <person name="Delgado O."/>
            <person name="Dinh H.H."/>
            <person name="Dong W."/>
            <person name="Draper H."/>
            <person name="Ernst S."/>
            <person name="Fu G."/>
            <person name="Gonzalez-Garay M.L."/>
            <person name="Garcia D.K."/>
            <person name="Gillett W."/>
            <person name="Gu J."/>
            <person name="Hao B."/>
            <person name="Haugen E."/>
            <person name="Havlak P."/>
            <person name="He X."/>
            <person name="Hennig S."/>
            <person name="Hu S."/>
            <person name="Huang W."/>
            <person name="Jackson L.R."/>
            <person name="Jacob L.S."/>
            <person name="Kelly S.H."/>
            <person name="Kube M."/>
            <person name="Levy R."/>
            <person name="Li Z."/>
            <person name="Liu B."/>
            <person name="Liu J."/>
            <person name="Liu W."/>
            <person name="Lu J."/>
            <person name="Maheshwari M."/>
            <person name="Nguyen B.-V."/>
            <person name="Okwuonu G.O."/>
            <person name="Palmeiri A."/>
            <person name="Pasternak S."/>
            <person name="Perez L.M."/>
            <person name="Phelps K.A."/>
            <person name="Plopper F.J."/>
            <person name="Qiang B."/>
            <person name="Raymond C."/>
            <person name="Rodriguez R."/>
            <person name="Saenphimmachak C."/>
            <person name="Santibanez J."/>
            <person name="Shen H."/>
            <person name="Shen Y."/>
            <person name="Subramanian S."/>
            <person name="Tabor P.E."/>
            <person name="Verduzco D."/>
            <person name="Waldron L."/>
            <person name="Wang J."/>
            <person name="Wang J."/>
            <person name="Wang Q."/>
            <person name="Williams G.A."/>
            <person name="Wong G.K.-S."/>
            <person name="Yao Z."/>
            <person name="Zhang J."/>
            <person name="Zhang X."/>
            <person name="Zhao G."/>
            <person name="Zhou J."/>
            <person name="Zhou Y."/>
            <person name="Nelson D."/>
            <person name="Lehrach H."/>
            <person name="Reinhardt R."/>
            <person name="Naylor S.L."/>
            <person name="Yang H."/>
            <person name="Olson M."/>
            <person name="Weinstock G."/>
            <person name="Gibbs R.A."/>
        </authorList>
    </citation>
    <scope>NUCLEOTIDE SEQUENCE [LARGE SCALE GENOMIC DNA]</scope>
</reference>
<reference key="6">
    <citation type="submission" date="2005-07" db="EMBL/GenBank/DDBJ databases">
        <authorList>
            <person name="Mural R.J."/>
            <person name="Istrail S."/>
            <person name="Sutton G.G."/>
            <person name="Florea L."/>
            <person name="Halpern A.L."/>
            <person name="Mobarry C.M."/>
            <person name="Lippert R."/>
            <person name="Walenz B."/>
            <person name="Shatkay H."/>
            <person name="Dew I."/>
            <person name="Miller J.R."/>
            <person name="Flanigan M.J."/>
            <person name="Edwards N.J."/>
            <person name="Bolanos R."/>
            <person name="Fasulo D."/>
            <person name="Halldorsson B.V."/>
            <person name="Hannenhalli S."/>
            <person name="Turner R."/>
            <person name="Yooseph S."/>
            <person name="Lu F."/>
            <person name="Nusskern D.R."/>
            <person name="Shue B.C."/>
            <person name="Zheng X.H."/>
            <person name="Zhong F."/>
            <person name="Delcher A.L."/>
            <person name="Huson D.H."/>
            <person name="Kravitz S.A."/>
            <person name="Mouchard L."/>
            <person name="Reinert K."/>
            <person name="Remington K.A."/>
            <person name="Clark A.G."/>
            <person name="Waterman M.S."/>
            <person name="Eichler E.E."/>
            <person name="Adams M.D."/>
            <person name="Hunkapiller M.W."/>
            <person name="Myers E.W."/>
            <person name="Venter J.C."/>
        </authorList>
    </citation>
    <scope>NUCLEOTIDE SEQUENCE [LARGE SCALE GENOMIC DNA]</scope>
</reference>
<reference key="7">
    <citation type="journal article" date="2004" name="Genome Res.">
        <title>The status, quality, and expansion of the NIH full-length cDNA project: the Mammalian Gene Collection (MGC).</title>
        <authorList>
            <consortium name="The MGC Project Team"/>
        </authorList>
    </citation>
    <scope>NUCLEOTIDE SEQUENCE [LARGE SCALE MRNA] (ISOFORM 3)</scope>
</reference>
<reference key="8">
    <citation type="journal article" date="2001" name="J. Membr. Biol.">
        <title>Tissue-specific expression and gabapentin-binding properties of calcium channel alpha2delta subunit subtypes.</title>
        <authorList>
            <person name="Gong H.C."/>
            <person name="Hang J."/>
            <person name="Kohler W."/>
            <person name="Li L."/>
            <person name="Su T.-Z."/>
        </authorList>
    </citation>
    <scope>DISULFIDE BONDS</scope>
    <scope>TISSUE SPECIFICITY</scope>
    <scope>GABAPENTIN-BINDING</scope>
</reference>
<reference key="9">
    <citation type="journal article" date="2003" name="J. Bioenerg. Biomembr.">
        <title>Calcium channel alpha2delta subunits: differential expression, function, and drug binding.</title>
        <authorList>
            <person name="Klugbauer N."/>
            <person name="Marais E."/>
            <person name="Hofmann F."/>
        </authorList>
    </citation>
    <scope>ALTERNATIVE SPLICING (ISOFORM 5)</scope>
</reference>
<reference key="10">
    <citation type="journal article" date="2003" name="Oncogene">
        <title>CACNA2D2-mediated apoptosis in NSCLC cells is associated with alterations of the intracellular calcium signaling and disruption of mitochondria membrane integrity.</title>
        <authorList>
            <person name="Carboni G.L."/>
            <person name="Gao B."/>
            <person name="Nishizaki M."/>
            <person name="Xu K."/>
            <person name="Minna J.D."/>
            <person name="Roth J.A."/>
            <person name="Ji L."/>
        </authorList>
    </citation>
    <scope>FUNCTION</scope>
</reference>
<reference key="11">
    <citation type="journal article" date="2004" name="Arch. Biochem. Biophys.">
        <title>Modulation of gating currents of the Ca(v)3.1 calcium channel by alpha 2 delta 2 and gamma 5 subunits.</title>
        <authorList>
            <person name="Lacinova L."/>
            <person name="Klugbauer N."/>
        </authorList>
    </citation>
    <scope>FUNCTION</scope>
</reference>
<reference key="12">
    <citation type="journal article" date="2009" name="Nat. Biotechnol.">
        <title>Mass-spectrometric identification and relative quantification of N-linked cell surface glycoproteins.</title>
        <authorList>
            <person name="Wollscheid B."/>
            <person name="Bausch-Fluck D."/>
            <person name="Henderson C."/>
            <person name="O'Brien R."/>
            <person name="Bibel M."/>
            <person name="Schiess R."/>
            <person name="Aebersold R."/>
            <person name="Watts J.D."/>
        </authorList>
    </citation>
    <scope>GLYCOSYLATION [LARGE SCALE ANALYSIS] AT ASN-386</scope>
    <source>
        <tissue>Leukemic T-cell</tissue>
    </source>
</reference>
<reference key="13">
    <citation type="journal article" date="2013" name="J. Med. Genet.">
        <title>Early infantile epileptic encephalopathy associated with a high voltage gated calcium channelopathy.</title>
        <authorList>
            <person name="Edvardson S."/>
            <person name="Oz S."/>
            <person name="Abulhijaa F.A."/>
            <person name="Taher F.B."/>
            <person name="Shaag A."/>
            <person name="Zenvirt S."/>
            <person name="Dascal N."/>
            <person name="Elpeleg O."/>
        </authorList>
    </citation>
    <scope>FUNCTION</scope>
    <scope>INVOLVEMENT IN CASVDD</scope>
    <scope>VARIANT CASVDD PRO-1047</scope>
    <scope>CHARACTERIZATION OF VARIANT CASVDD PRO-1047</scope>
</reference>
<reference key="14">
    <citation type="journal article" date="2013" name="PLoS ONE">
        <title>A novel null homozygous mutation confirms CACNA2D2 as a gene mutated in epileptic encephalopathy.</title>
        <authorList>
            <person name="Pippucci T."/>
            <person name="Parmeggiani A."/>
            <person name="Palombo F."/>
            <person name="Maresca A."/>
            <person name="Angius A."/>
            <person name="Crisponi L."/>
            <person name="Cucca F."/>
            <person name="Liguori R."/>
            <person name="Valentino M.L."/>
            <person name="Seri M."/>
            <person name="Carelli V."/>
        </authorList>
    </citation>
    <scope>INVOLVEMENT IN CASVDD</scope>
</reference>
<reference key="15">
    <citation type="journal article" date="2018" name="Case Rep. Genet.">
        <title>Epileptic encephalopathy and cerebellar atrophy resulting from compound heterozygous CACNA2D2 variants.</title>
        <authorList>
            <person name="Butler K.M."/>
            <person name="Holt P.J."/>
            <person name="Milla S.S."/>
            <person name="da Silva C."/>
            <person name="Alexander J.J."/>
            <person name="Escayg A."/>
        </authorList>
    </citation>
    <scope>INVOLVEMENT IN CASVDD</scope>
    <scope>VARIANTS CASVDD LEU-261 AND PRO-1053</scope>
</reference>
<reference key="16">
    <citation type="journal article" date="2019" name="Genet. Med.">
        <title>Exome sequencing in congenital ataxia identifies two new candidate genes and highlights a pathophysiological link between some congenital ataxias and early infantile epileptic encephalopathies.</title>
        <authorList>
            <person name="Valence S."/>
            <person name="Cochet E."/>
            <person name="Rougeot C."/>
            <person name="Garel C."/>
            <person name="Chantot-Bastaraud S."/>
            <person name="Lainey E."/>
            <person name="Afenjar A."/>
            <person name="Barthez M.A."/>
            <person name="Bednarek N."/>
            <person name="Doummar D."/>
            <person name="Faivre L."/>
            <person name="Goizet C."/>
            <person name="Haye D."/>
            <person name="Heron B."/>
            <person name="Kemlin I."/>
            <person name="Lacombe D."/>
            <person name="Milh M."/>
            <person name="Moutard M.L."/>
            <person name="Riant F."/>
            <person name="Robin S."/>
            <person name="Roubertie A."/>
            <person name="Sarda P."/>
            <person name="Toutain A."/>
            <person name="Villard L."/>
            <person name="Ville D."/>
            <person name="Billette de Villemeur T."/>
            <person name="Rodriguez D."/>
            <person name="Burglen L."/>
        </authorList>
    </citation>
    <scope>INVOLVEMENT IN CASVDD</scope>
</reference>
<reference key="17">
    <citation type="journal article" date="2021" name="Am. J. Hum. Genet.">
        <title>Progressive myoclonus epilepsies-Residual unsolved cases have marked genetic heterogeneity including dolichol-dependent protein glycosylation pathway genes.</title>
        <authorList>
            <person name="Courage C."/>
            <person name="Oliver K.L."/>
            <person name="Park E.J."/>
            <person name="Cameron J.M."/>
            <person name="Grabinska K.A."/>
            <person name="Muona M."/>
            <person name="Canafoglia L."/>
            <person name="Gambardella A."/>
            <person name="Said E."/>
            <person name="Afawi Z."/>
            <person name="Baykan B."/>
            <person name="Brandt C."/>
            <person name="di Bonaventura C."/>
            <person name="Chew H.B."/>
            <person name="Criscuolo C."/>
            <person name="Dibbens L.M."/>
            <person name="Castellotti B."/>
            <person name="Riguzzi P."/>
            <person name="Labate A."/>
            <person name="Filla A."/>
            <person name="Giallonardo A.T."/>
            <person name="Berecki G."/>
            <person name="Jackson C.B."/>
            <person name="Joensuu T."/>
            <person name="Damiano J.A."/>
            <person name="Kivity S."/>
            <person name="Korczyn A."/>
            <person name="Palotie A."/>
            <person name="Striano P."/>
            <person name="Uccellini D."/>
            <person name="Giuliano L."/>
            <person name="Andermann E."/>
            <person name="Scheffer I.E."/>
            <person name="Michelucci R."/>
            <person name="Bahlo M."/>
            <person name="Franceschetti S."/>
            <person name="Sessa W.C."/>
            <person name="Berkovic S.F."/>
            <person name="Lehesjoki A.E."/>
        </authorList>
    </citation>
    <scope>VARIANT CYS-371</scope>
</reference>
<accession>Q9NY47</accession>
<accession>A7MD15</accession>
<accession>Q9NY48</accession>
<accession>Q9UEW0</accession>
<accession>Q9Y268</accession>
<dbReference type="EMBL" id="AF042792">
    <property type="protein sequence ID" value="AAB96913.1"/>
    <property type="molecule type" value="mRNA"/>
</dbReference>
<dbReference type="EMBL" id="AF042793">
    <property type="protein sequence ID" value="AAB96914.1"/>
    <property type="molecule type" value="mRNA"/>
</dbReference>
<dbReference type="EMBL" id="AF040709">
    <property type="protein sequence ID" value="AAC70914.1"/>
    <property type="molecule type" value="mRNA"/>
</dbReference>
<dbReference type="EMBL" id="AJ251367">
    <property type="protein sequence ID" value="CAB86192.1"/>
    <property type="molecule type" value="mRNA"/>
</dbReference>
<dbReference type="EMBL" id="AJ251368">
    <property type="protein sequence ID" value="CAB86193.1"/>
    <property type="molecule type" value="mRNA"/>
</dbReference>
<dbReference type="EMBL" id="AB011130">
    <property type="protein sequence ID" value="BAA25484.1"/>
    <property type="molecule type" value="mRNA"/>
</dbReference>
<dbReference type="EMBL" id="AL450422">
    <property type="status" value="NOT_ANNOTATED_CDS"/>
    <property type="molecule type" value="Genomic_DNA"/>
</dbReference>
<dbReference type="EMBL" id="Z75742">
    <property type="status" value="NOT_ANNOTATED_CDS"/>
    <property type="molecule type" value="Genomic_DNA"/>
</dbReference>
<dbReference type="EMBL" id="Z75743">
    <property type="status" value="NOT_ANNOTATED_CDS"/>
    <property type="molecule type" value="Genomic_DNA"/>
</dbReference>
<dbReference type="EMBL" id="Z84492">
    <property type="status" value="NOT_ANNOTATED_CDS"/>
    <property type="molecule type" value="Genomic_DNA"/>
</dbReference>
<dbReference type="EMBL" id="Z84494">
    <property type="status" value="NOT_ANNOTATED_CDS"/>
    <property type="molecule type" value="Genomic_DNA"/>
</dbReference>
<dbReference type="EMBL" id="Z84495">
    <property type="status" value="NOT_ANNOTATED_CDS"/>
    <property type="molecule type" value="Genomic_DNA"/>
</dbReference>
<dbReference type="EMBL" id="CH471055">
    <property type="protein sequence ID" value="EAW65121.1"/>
    <property type="molecule type" value="Genomic_DNA"/>
</dbReference>
<dbReference type="EMBL" id="BC152438">
    <property type="protein sequence ID" value="AAI52439.1"/>
    <property type="molecule type" value="mRNA"/>
</dbReference>
<dbReference type="CCDS" id="CCDS33763.1">
    <molecule id="Q9NY47-2"/>
</dbReference>
<dbReference type="CCDS" id="CCDS54588.1">
    <molecule id="Q9NY47-1"/>
</dbReference>
<dbReference type="CCDS" id="CCDS63647.1">
    <molecule id="Q9NY47-3"/>
</dbReference>
<dbReference type="CCDS" id="CCDS77748.1">
    <molecule id="Q9NY47-4"/>
</dbReference>
<dbReference type="RefSeq" id="NP_001005505.1">
    <molecule id="Q9NY47-3"/>
    <property type="nucleotide sequence ID" value="NM_001005505.3"/>
</dbReference>
<dbReference type="RefSeq" id="NP_001167522.1">
    <molecule id="Q9NY47-1"/>
    <property type="nucleotide sequence ID" value="NM_001174051.3"/>
</dbReference>
<dbReference type="RefSeq" id="NP_001278030.1">
    <molecule id="Q9NY47-4"/>
    <property type="nucleotide sequence ID" value="NM_001291101.1"/>
</dbReference>
<dbReference type="RefSeq" id="NP_006021.2">
    <molecule id="Q9NY47-2"/>
    <property type="nucleotide sequence ID" value="NM_006030.4"/>
</dbReference>
<dbReference type="SMR" id="Q9NY47"/>
<dbReference type="BioGRID" id="114678">
    <property type="interactions" value="103"/>
</dbReference>
<dbReference type="ComplexPortal" id="CPX-8740">
    <property type="entry name" value="Cav1.1 voltage-gated calcium channel complex, CACNA2D2-CACNB1-CACNG1 variant"/>
</dbReference>
<dbReference type="ComplexPortal" id="CPX-8741">
    <property type="entry name" value="Cav1.1 voltage-gated calcium channel complex, CACNA2D2-CACNB2-CACNG1 variant"/>
</dbReference>
<dbReference type="ComplexPortal" id="CPX-8742">
    <property type="entry name" value="Cav1.1 voltage-gated calcium channel complex, CACNA2D2-CACNB3-CACNG1 variant"/>
</dbReference>
<dbReference type="ComplexPortal" id="CPX-8743">
    <property type="entry name" value="Cav1.1 voltage-gated calcium channel complex, CACNA2D2-CACNB4-CACNG1 variant"/>
</dbReference>
<dbReference type="ComplexPortal" id="CPX-8864">
    <property type="entry name" value="Cav1.2 voltage-gated calcium channel complex, CACNA2D2-CACNB2 variant"/>
</dbReference>
<dbReference type="ComplexPortal" id="CPX-8865">
    <property type="entry name" value="Cav1.2 voltage-gated calcium channel complex, CACNA2D2-CACNB1 variant"/>
</dbReference>
<dbReference type="ComplexPortal" id="CPX-8866">
    <property type="entry name" value="Cav1.2 voltage-gated calcium channel complex, CACNA2D2-CACNB3 variant"/>
</dbReference>
<dbReference type="ComplexPortal" id="CPX-8867">
    <property type="entry name" value="Cav1.2 voltage-gated calcium channel complex, CACNA2D2-CACNB4 variant"/>
</dbReference>
<dbReference type="FunCoup" id="Q9NY47">
    <property type="interactions" value="1107"/>
</dbReference>
<dbReference type="IntAct" id="Q9NY47">
    <property type="interactions" value="69"/>
</dbReference>
<dbReference type="STRING" id="9606.ENSP00000418081"/>
<dbReference type="BindingDB" id="Q9NY47"/>
<dbReference type="ChEMBL" id="CHEMBL3896"/>
<dbReference type="DrugBank" id="DB01244">
    <property type="generic name" value="Bepridil"/>
</dbReference>
<dbReference type="DrugBank" id="DB13746">
    <property type="generic name" value="Bioallethrin"/>
</dbReference>
<dbReference type="DrugBank" id="DB11148">
    <property type="generic name" value="Butamben"/>
</dbReference>
<dbReference type="DrugBank" id="DB09235">
    <property type="generic name" value="Efonidipine"/>
</dbReference>
<dbReference type="DrugBank" id="DB00228">
    <property type="generic name" value="Enflurane"/>
</dbReference>
<dbReference type="DrugBank" id="DB00153">
    <property type="generic name" value="Ergocalciferol"/>
</dbReference>
<dbReference type="DrugBank" id="DB01023">
    <property type="generic name" value="Felodipine"/>
</dbReference>
<dbReference type="DrugBank" id="DB00996">
    <property type="generic name" value="Gabapentin"/>
</dbReference>
<dbReference type="DrugBank" id="DB08872">
    <property type="generic name" value="Gabapentin enacarbil"/>
</dbReference>
<dbReference type="DrugBank" id="DB00270">
    <property type="generic name" value="Isradipine"/>
</dbReference>
<dbReference type="DrugBank" id="DB00622">
    <property type="generic name" value="Nicardipine"/>
</dbReference>
<dbReference type="DrugBank" id="DB01054">
    <property type="generic name" value="Nitrendipine"/>
</dbReference>
<dbReference type="DrugBank" id="DB00661">
    <property type="generic name" value="Verapamil"/>
</dbReference>
<dbReference type="DrugCentral" id="Q9NY47"/>
<dbReference type="TCDB" id="8.A.18.1.2">
    <property type="family name" value="the ca(2+) channel auxiliary subunit Alpha2Delta types 1-4 (cca-Alpha2Delta) family"/>
</dbReference>
<dbReference type="CarbonylDB" id="Q9NY47"/>
<dbReference type="GlyCosmos" id="Q9NY47">
    <property type="glycosylation" value="6 sites, No reported glycans"/>
</dbReference>
<dbReference type="GlyGen" id="Q9NY47">
    <property type="glycosylation" value="11 sites, 6 N-linked glycans (7 sites)"/>
</dbReference>
<dbReference type="iPTMnet" id="Q9NY47"/>
<dbReference type="PhosphoSitePlus" id="Q9NY47"/>
<dbReference type="BioMuta" id="CACNA2D2"/>
<dbReference type="DMDM" id="387912827"/>
<dbReference type="jPOST" id="Q9NY47"/>
<dbReference type="MassIVE" id="Q9NY47"/>
<dbReference type="PaxDb" id="9606-ENSP00000418081"/>
<dbReference type="PeptideAtlas" id="Q9NY47"/>
<dbReference type="ProteomicsDB" id="83169">
    <molecule id="Q9NY47-1"/>
</dbReference>
<dbReference type="ProteomicsDB" id="83170">
    <molecule id="Q9NY47-2"/>
</dbReference>
<dbReference type="ProteomicsDB" id="83171">
    <molecule id="Q9NY47-3"/>
</dbReference>
<dbReference type="ProteomicsDB" id="83172">
    <molecule id="Q9NY47-4"/>
</dbReference>
<dbReference type="ProteomicsDB" id="83173">
    <molecule id="Q9NY47-5"/>
</dbReference>
<dbReference type="Pumba" id="Q9NY47"/>
<dbReference type="Antibodypedia" id="30959">
    <property type="antibodies" value="158 antibodies from 29 providers"/>
</dbReference>
<dbReference type="DNASU" id="9254"/>
<dbReference type="Ensembl" id="ENST00000266039.7">
    <molecule id="Q9NY47-3"/>
    <property type="protein sequence ID" value="ENSP00000266039.3"/>
    <property type="gene ID" value="ENSG00000007402.12"/>
</dbReference>
<dbReference type="Ensembl" id="ENST00000360963.7">
    <molecule id="Q9NY47-4"/>
    <property type="protein sequence ID" value="ENSP00000354228.3"/>
    <property type="gene ID" value="ENSG00000007402.12"/>
</dbReference>
<dbReference type="Ensembl" id="ENST00000424201.7">
    <molecule id="Q9NY47-2"/>
    <property type="protein sequence ID" value="ENSP00000390329.2"/>
    <property type="gene ID" value="ENSG00000007402.12"/>
</dbReference>
<dbReference type="Ensembl" id="ENST00000479441.1">
    <molecule id="Q9NY47-1"/>
    <property type="protein sequence ID" value="ENSP00000418081.1"/>
    <property type="gene ID" value="ENSG00000007402.12"/>
</dbReference>
<dbReference type="GeneID" id="9254"/>
<dbReference type="KEGG" id="hsa:9254"/>
<dbReference type="MANE-Select" id="ENST00000424201.7">
    <molecule id="Q9NY47-2"/>
    <property type="protein sequence ID" value="ENSP00000390329.2"/>
    <property type="RefSeq nucleotide sequence ID" value="NM_006030.4"/>
    <property type="RefSeq protein sequence ID" value="NP_006021.2"/>
</dbReference>
<dbReference type="UCSC" id="uc003dap.4">
    <molecule id="Q9NY47-1"/>
    <property type="organism name" value="human"/>
</dbReference>
<dbReference type="AGR" id="HGNC:1400"/>
<dbReference type="CTD" id="9254"/>
<dbReference type="DisGeNET" id="9254"/>
<dbReference type="GeneCards" id="CACNA2D2"/>
<dbReference type="HGNC" id="HGNC:1400">
    <property type="gene designation" value="CACNA2D2"/>
</dbReference>
<dbReference type="HPA" id="ENSG00000007402">
    <property type="expression patterns" value="Tissue enhanced (lung)"/>
</dbReference>
<dbReference type="MalaCards" id="CACNA2D2"/>
<dbReference type="MIM" id="607082">
    <property type="type" value="gene"/>
</dbReference>
<dbReference type="MIM" id="618501">
    <property type="type" value="phenotype"/>
</dbReference>
<dbReference type="neXtProt" id="NX_Q9NY47"/>
<dbReference type="OpenTargets" id="ENSG00000007402"/>
<dbReference type="PharmGKB" id="PA26012"/>
<dbReference type="VEuPathDB" id="HostDB:ENSG00000007402"/>
<dbReference type="eggNOG" id="KOG2353">
    <property type="taxonomic scope" value="Eukaryota"/>
</dbReference>
<dbReference type="GeneTree" id="ENSGT00940000156238"/>
<dbReference type="HOGENOM" id="CLU_004660_0_0_1"/>
<dbReference type="InParanoid" id="Q9NY47"/>
<dbReference type="OMA" id="PQITNFR"/>
<dbReference type="OrthoDB" id="10054666at2759"/>
<dbReference type="PAN-GO" id="Q9NY47">
    <property type="GO annotations" value="2 GO annotations based on evolutionary models"/>
</dbReference>
<dbReference type="TreeFam" id="TF315824"/>
<dbReference type="PathwayCommons" id="Q9NY47"/>
<dbReference type="Reactome" id="R-HSA-112308">
    <property type="pathway name" value="Presynaptic depolarization and calcium channel opening"/>
</dbReference>
<dbReference type="Reactome" id="R-HSA-400042">
    <property type="pathway name" value="Adrenaline,noradrenaline inhibits insulin secretion"/>
</dbReference>
<dbReference type="Reactome" id="R-HSA-422356">
    <property type="pathway name" value="Regulation of insulin secretion"/>
</dbReference>
<dbReference type="Reactome" id="R-HSA-5576892">
    <property type="pathway name" value="Phase 0 - rapid depolarisation"/>
</dbReference>
<dbReference type="Reactome" id="R-HSA-5576893">
    <property type="pathway name" value="Phase 2 - plateau phase"/>
</dbReference>
<dbReference type="Reactome" id="R-HSA-9662360">
    <property type="pathway name" value="Sensory processing of sound by inner hair cells of the cochlea"/>
</dbReference>
<dbReference type="SignaLink" id="Q9NY47"/>
<dbReference type="BioGRID-ORCS" id="9254">
    <property type="hits" value="9 hits in 1158 CRISPR screens"/>
</dbReference>
<dbReference type="CD-CODE" id="FB4E32DD">
    <property type="entry name" value="Presynaptic clusters and postsynaptic densities"/>
</dbReference>
<dbReference type="ChiTaRS" id="CACNA2D2">
    <property type="organism name" value="human"/>
</dbReference>
<dbReference type="GeneWiki" id="CACNA2D2"/>
<dbReference type="GenomeRNAi" id="9254"/>
<dbReference type="Pharos" id="Q9NY47">
    <property type="development level" value="Tclin"/>
</dbReference>
<dbReference type="PRO" id="PR:Q9NY47"/>
<dbReference type="Proteomes" id="UP000005640">
    <property type="component" value="Chromosome 3"/>
</dbReference>
<dbReference type="RNAct" id="Q9NY47">
    <property type="molecule type" value="protein"/>
</dbReference>
<dbReference type="Bgee" id="ENSG00000007402">
    <property type="expression patterns" value="Expressed in lower lobe of lung and 163 other cell types or tissues"/>
</dbReference>
<dbReference type="ExpressionAtlas" id="Q9NY47">
    <property type="expression patterns" value="baseline and differential"/>
</dbReference>
<dbReference type="GO" id="GO:0098982">
    <property type="term" value="C:GABA-ergic synapse"/>
    <property type="evidence" value="ECO:0007669"/>
    <property type="project" value="Ensembl"/>
</dbReference>
<dbReference type="GO" id="GO:0005886">
    <property type="term" value="C:plasma membrane"/>
    <property type="evidence" value="ECO:0000304"/>
    <property type="project" value="Reactome"/>
</dbReference>
<dbReference type="GO" id="GO:0048787">
    <property type="term" value="C:presynaptic active zone membrane"/>
    <property type="evidence" value="ECO:0007669"/>
    <property type="project" value="Ensembl"/>
</dbReference>
<dbReference type="GO" id="GO:0005891">
    <property type="term" value="C:voltage-gated calcium channel complex"/>
    <property type="evidence" value="ECO:0000318"/>
    <property type="project" value="GO_Central"/>
</dbReference>
<dbReference type="GO" id="GO:0046872">
    <property type="term" value="F:metal ion binding"/>
    <property type="evidence" value="ECO:0007669"/>
    <property type="project" value="UniProtKB-KW"/>
</dbReference>
<dbReference type="GO" id="GO:0005245">
    <property type="term" value="F:voltage-gated calcium channel activity"/>
    <property type="evidence" value="ECO:0000318"/>
    <property type="project" value="GO_Central"/>
</dbReference>
<dbReference type="GO" id="GO:0055001">
    <property type="term" value="P:muscle cell development"/>
    <property type="evidence" value="ECO:0007669"/>
    <property type="project" value="Ensembl"/>
</dbReference>
<dbReference type="GO" id="GO:0007528">
    <property type="term" value="P:neuromuscular junction development"/>
    <property type="evidence" value="ECO:0007669"/>
    <property type="project" value="Ensembl"/>
</dbReference>
<dbReference type="GO" id="GO:0035265">
    <property type="term" value="P:organ growth"/>
    <property type="evidence" value="ECO:0007669"/>
    <property type="project" value="Ensembl"/>
</dbReference>
<dbReference type="GO" id="GO:0046622">
    <property type="term" value="P:positive regulation of organ growth"/>
    <property type="evidence" value="ECO:0007669"/>
    <property type="project" value="Ensembl"/>
</dbReference>
<dbReference type="GO" id="GO:0040014">
    <property type="term" value="P:regulation of multicellular organism growth"/>
    <property type="evidence" value="ECO:0007669"/>
    <property type="project" value="Ensembl"/>
</dbReference>
<dbReference type="GO" id="GO:0098696">
    <property type="term" value="P:regulation of neurotransmitter receptor localization to postsynaptic specialization membrane"/>
    <property type="evidence" value="ECO:0007669"/>
    <property type="project" value="Ensembl"/>
</dbReference>
<dbReference type="GO" id="GO:0060024">
    <property type="term" value="P:rhythmic synaptic transmission"/>
    <property type="evidence" value="ECO:0007669"/>
    <property type="project" value="Ensembl"/>
</dbReference>
<dbReference type="CDD" id="cd01463">
    <property type="entry name" value="vWA_VGCC_like"/>
    <property type="match status" value="1"/>
</dbReference>
<dbReference type="FunFam" id="3.30.450.20:FF:000014">
    <property type="entry name" value="voltage-dependent calcium channel subunit alpha-2/delta-1 isoform X1"/>
    <property type="match status" value="1"/>
</dbReference>
<dbReference type="FunFam" id="3.40.50.410:FF:000006">
    <property type="entry name" value="voltage-dependent calcium channel subunit alpha-2/delta-1 isoform X1"/>
    <property type="match status" value="1"/>
</dbReference>
<dbReference type="Gene3D" id="3.30.450.20">
    <property type="entry name" value="PAS domain"/>
    <property type="match status" value="1"/>
</dbReference>
<dbReference type="Gene3D" id="3.40.50.410">
    <property type="entry name" value="von Willebrand factor, type A domain"/>
    <property type="match status" value="1"/>
</dbReference>
<dbReference type="InterPro" id="IPR051173">
    <property type="entry name" value="Ca_channel_alpha-2/delta"/>
</dbReference>
<dbReference type="InterPro" id="IPR013680">
    <property type="entry name" value="VDCC_a2/dsu"/>
</dbReference>
<dbReference type="InterPro" id="IPR013608">
    <property type="entry name" value="VWA_N"/>
</dbReference>
<dbReference type="InterPro" id="IPR002035">
    <property type="entry name" value="VWF_A"/>
</dbReference>
<dbReference type="InterPro" id="IPR036465">
    <property type="entry name" value="vWFA_dom_sf"/>
</dbReference>
<dbReference type="PANTHER" id="PTHR10166">
    <property type="entry name" value="VOLTAGE-DEPENDENT CALCIUM CHANNEL SUBUNIT ALPHA-2/DELTA-RELATED"/>
    <property type="match status" value="1"/>
</dbReference>
<dbReference type="PANTHER" id="PTHR10166:SF7">
    <property type="entry name" value="VOLTAGE-DEPENDENT CALCIUM CHANNEL SUBUNIT ALPHA-2_DELTA-2"/>
    <property type="match status" value="1"/>
</dbReference>
<dbReference type="Pfam" id="PF08473">
    <property type="entry name" value="VGCC_alpha2"/>
    <property type="match status" value="1"/>
</dbReference>
<dbReference type="Pfam" id="PF00092">
    <property type="entry name" value="VWA"/>
    <property type="match status" value="1"/>
</dbReference>
<dbReference type="Pfam" id="PF08399">
    <property type="entry name" value="VWA_N"/>
    <property type="match status" value="1"/>
</dbReference>
<dbReference type="SMART" id="SM00327">
    <property type="entry name" value="VWA"/>
    <property type="match status" value="1"/>
</dbReference>
<dbReference type="SUPFAM" id="SSF53300">
    <property type="entry name" value="vWA-like"/>
    <property type="match status" value="1"/>
</dbReference>
<dbReference type="PROSITE" id="PS50234">
    <property type="entry name" value="VWFA"/>
    <property type="match status" value="1"/>
</dbReference>
<organism>
    <name type="scientific">Homo sapiens</name>
    <name type="common">Human</name>
    <dbReference type="NCBI Taxonomy" id="9606"/>
    <lineage>
        <taxon>Eukaryota</taxon>
        <taxon>Metazoa</taxon>
        <taxon>Chordata</taxon>
        <taxon>Craniata</taxon>
        <taxon>Vertebrata</taxon>
        <taxon>Euteleostomi</taxon>
        <taxon>Mammalia</taxon>
        <taxon>Eutheria</taxon>
        <taxon>Euarchontoglires</taxon>
        <taxon>Primates</taxon>
        <taxon>Haplorrhini</taxon>
        <taxon>Catarrhini</taxon>
        <taxon>Hominidae</taxon>
        <taxon>Homo</taxon>
    </lineage>
</organism>